<feature type="chain" id="PRO_0000324916" description="Leucine aminopeptidase 2">
    <location>
        <begin position="1"/>
        <end position="623"/>
    </location>
</feature>
<feature type="region of interest" description="Disordered" evidence="4">
    <location>
        <begin position="1"/>
        <end position="23"/>
    </location>
</feature>
<feature type="compositionally biased region" description="Polar residues" evidence="4">
    <location>
        <begin position="7"/>
        <end position="23"/>
    </location>
</feature>
<feature type="active site" description="Proton acceptor" evidence="3">
    <location>
        <position position="307"/>
    </location>
</feature>
<feature type="active site" description="Proton donor" evidence="3">
    <location>
        <position position="394"/>
    </location>
</feature>
<feature type="binding site" evidence="1">
    <location>
        <begin position="145"/>
        <end position="147"/>
    </location>
    <ligand>
        <name>a peptide</name>
        <dbReference type="ChEBI" id="CHEBI:60466"/>
    </ligand>
</feature>
<feature type="binding site" evidence="1">
    <location>
        <begin position="277"/>
        <end position="282"/>
    </location>
    <ligand>
        <name>a peptide</name>
        <dbReference type="ChEBI" id="CHEBI:60466"/>
    </ligand>
</feature>
<feature type="binding site" evidence="3">
    <location>
        <position position="306"/>
    </location>
    <ligand>
        <name>Zn(2+)</name>
        <dbReference type="ChEBI" id="CHEBI:29105"/>
        <note>catalytic</note>
    </ligand>
</feature>
<feature type="binding site" evidence="3">
    <location>
        <position position="310"/>
    </location>
    <ligand>
        <name>Zn(2+)</name>
        <dbReference type="ChEBI" id="CHEBI:29105"/>
        <note>catalytic</note>
    </ligand>
</feature>
<feature type="binding site" evidence="3">
    <location>
        <position position="329"/>
    </location>
    <ligand>
        <name>Zn(2+)</name>
        <dbReference type="ChEBI" id="CHEBI:29105"/>
        <note>catalytic</note>
    </ligand>
</feature>
<proteinExistence type="inferred from homology"/>
<reference key="1">
    <citation type="journal article" date="2009" name="Genome Res.">
        <title>Comparative genomic analyses of the human fungal pathogens Coccidioides and their relatives.</title>
        <authorList>
            <person name="Sharpton T.J."/>
            <person name="Stajich J.E."/>
            <person name="Rounsley S.D."/>
            <person name="Gardner M.J."/>
            <person name="Wortman J.R."/>
            <person name="Jordar V.S."/>
            <person name="Maiti R."/>
            <person name="Kodira C.D."/>
            <person name="Neafsey D.E."/>
            <person name="Zeng Q."/>
            <person name="Hung C.-Y."/>
            <person name="McMahan C."/>
            <person name="Muszewska A."/>
            <person name="Grynberg M."/>
            <person name="Mandel M.A."/>
            <person name="Kellner E.M."/>
            <person name="Barker B.M."/>
            <person name="Galgiani J.N."/>
            <person name="Orbach M.J."/>
            <person name="Kirkland T.N."/>
            <person name="Cole G.T."/>
            <person name="Henn M.R."/>
            <person name="Birren B.W."/>
            <person name="Taylor J.W."/>
        </authorList>
    </citation>
    <scope>NUCLEOTIDE SEQUENCE [LARGE SCALE GENOMIC DNA]</scope>
    <source>
        <strain>NAm1 / WU24</strain>
    </source>
</reference>
<protein>
    <recommendedName>
        <fullName>Leucine aminopeptidase 2</fullName>
        <ecNumber>3.4.11.-</ecNumber>
    </recommendedName>
    <alternativeName>
        <fullName>Epoxide hydrolase</fullName>
        <ecNumber>3.3.2.10</ecNumber>
    </alternativeName>
    <alternativeName>
        <fullName>Leukotriene A-4 hydrolase homolog</fullName>
        <shortName>LTA-4 hydrolase</shortName>
    </alternativeName>
</protein>
<accession>A6RCT2</accession>
<organism>
    <name type="scientific">Ajellomyces capsulatus (strain NAm1 / WU24)</name>
    <name type="common">Darling's disease fungus</name>
    <name type="synonym">Histoplasma capsulatum</name>
    <dbReference type="NCBI Taxonomy" id="2059318"/>
    <lineage>
        <taxon>Eukaryota</taxon>
        <taxon>Fungi</taxon>
        <taxon>Dikarya</taxon>
        <taxon>Ascomycota</taxon>
        <taxon>Pezizomycotina</taxon>
        <taxon>Eurotiomycetes</taxon>
        <taxon>Eurotiomycetidae</taxon>
        <taxon>Onygenales</taxon>
        <taxon>Ajellomycetaceae</taxon>
        <taxon>Histoplasma</taxon>
    </lineage>
</organism>
<keyword id="KW-0963">Cytoplasm</keyword>
<keyword id="KW-0378">Hydrolase</keyword>
<keyword id="KW-0479">Metal-binding</keyword>
<keyword id="KW-0482">Metalloprotease</keyword>
<keyword id="KW-0539">Nucleus</keyword>
<keyword id="KW-0645">Protease</keyword>
<keyword id="KW-1185">Reference proteome</keyword>
<keyword id="KW-0862">Zinc</keyword>
<evidence type="ECO:0000250" key="1">
    <source>
        <dbReference type="UniProtKB" id="P09960"/>
    </source>
</evidence>
<evidence type="ECO:0000250" key="2">
    <source>
        <dbReference type="UniProtKB" id="Q10740"/>
    </source>
</evidence>
<evidence type="ECO:0000255" key="3">
    <source>
        <dbReference type="PROSITE-ProRule" id="PRU10095"/>
    </source>
</evidence>
<evidence type="ECO:0000256" key="4">
    <source>
        <dbReference type="SAM" id="MobiDB-lite"/>
    </source>
</evidence>
<evidence type="ECO:0000305" key="5"/>
<name>LKHA4_AJECN</name>
<gene>
    <name type="ORF">HCAG_07440</name>
</gene>
<dbReference type="EC" id="3.4.11.-"/>
<dbReference type="EC" id="3.3.2.10"/>
<dbReference type="EMBL" id="CH476662">
    <property type="protein sequence ID" value="EDN10979.1"/>
    <property type="status" value="ALT_SEQ"/>
    <property type="molecule type" value="Genomic_DNA"/>
</dbReference>
<dbReference type="SMR" id="A6RCT2"/>
<dbReference type="STRING" id="339724.A6RCT2"/>
<dbReference type="MEROPS" id="M01.034"/>
<dbReference type="KEGG" id="aje:HCAG_07440"/>
<dbReference type="HOGENOM" id="CLU_014505_1_1_1"/>
<dbReference type="OrthoDB" id="2529at299071"/>
<dbReference type="Proteomes" id="UP000009297">
    <property type="component" value="Unassembled WGS sequence"/>
</dbReference>
<dbReference type="GO" id="GO:0005829">
    <property type="term" value="C:cytosol"/>
    <property type="evidence" value="ECO:0007669"/>
    <property type="project" value="TreeGrafter"/>
</dbReference>
<dbReference type="GO" id="GO:0005634">
    <property type="term" value="C:nucleus"/>
    <property type="evidence" value="ECO:0007669"/>
    <property type="project" value="UniProtKB-SubCell"/>
</dbReference>
<dbReference type="GO" id="GO:0004177">
    <property type="term" value="F:aminopeptidase activity"/>
    <property type="evidence" value="ECO:0000250"/>
    <property type="project" value="UniProtKB"/>
</dbReference>
<dbReference type="GO" id="GO:0004301">
    <property type="term" value="F:epoxide hydrolase activity"/>
    <property type="evidence" value="ECO:0000250"/>
    <property type="project" value="UniProtKB"/>
</dbReference>
<dbReference type="GO" id="GO:0008237">
    <property type="term" value="F:metallopeptidase activity"/>
    <property type="evidence" value="ECO:0007669"/>
    <property type="project" value="UniProtKB-KW"/>
</dbReference>
<dbReference type="GO" id="GO:0008270">
    <property type="term" value="F:zinc ion binding"/>
    <property type="evidence" value="ECO:0000250"/>
    <property type="project" value="UniProtKB"/>
</dbReference>
<dbReference type="GO" id="GO:0043171">
    <property type="term" value="P:peptide catabolic process"/>
    <property type="evidence" value="ECO:0000250"/>
    <property type="project" value="UniProtKB"/>
</dbReference>
<dbReference type="GO" id="GO:0006508">
    <property type="term" value="P:proteolysis"/>
    <property type="evidence" value="ECO:0007669"/>
    <property type="project" value="UniProtKB-KW"/>
</dbReference>
<dbReference type="CDD" id="cd09599">
    <property type="entry name" value="M1_LTA4H"/>
    <property type="match status" value="1"/>
</dbReference>
<dbReference type="FunFam" id="1.10.390.10:FF:000009">
    <property type="entry name" value="Leukotriene A(4) hydrolase"/>
    <property type="match status" value="1"/>
</dbReference>
<dbReference type="FunFam" id="1.25.40.320:FF:000001">
    <property type="entry name" value="Leukotriene A(4) hydrolase"/>
    <property type="match status" value="1"/>
</dbReference>
<dbReference type="FunFam" id="2.60.40.1730:FF:000004">
    <property type="entry name" value="Leukotriene A(4) hydrolase"/>
    <property type="match status" value="1"/>
</dbReference>
<dbReference type="FunFam" id="3.30.2010.30:FF:000001">
    <property type="entry name" value="Leukotriene A(4) hydrolase"/>
    <property type="match status" value="1"/>
</dbReference>
<dbReference type="Gene3D" id="3.30.2010.30">
    <property type="match status" value="1"/>
</dbReference>
<dbReference type="Gene3D" id="1.10.390.10">
    <property type="entry name" value="Neutral Protease Domain 2"/>
    <property type="match status" value="1"/>
</dbReference>
<dbReference type="Gene3D" id="1.25.40.320">
    <property type="entry name" value="Peptidase M1, leukotriene A4 hydrolase/aminopeptidase C-terminal domain"/>
    <property type="match status" value="1"/>
</dbReference>
<dbReference type="Gene3D" id="2.60.40.1730">
    <property type="entry name" value="tricorn interacting facor f3 domain"/>
    <property type="match status" value="1"/>
</dbReference>
<dbReference type="InterPro" id="IPR045357">
    <property type="entry name" value="Aminopeptidase_N-like_N"/>
</dbReference>
<dbReference type="InterPro" id="IPR042097">
    <property type="entry name" value="Aminopeptidase_N-like_N_sf"/>
</dbReference>
<dbReference type="InterPro" id="IPR016024">
    <property type="entry name" value="ARM-type_fold"/>
</dbReference>
<dbReference type="InterPro" id="IPR012777">
    <property type="entry name" value="LTA4H"/>
</dbReference>
<dbReference type="InterPro" id="IPR049980">
    <property type="entry name" value="LTA4H_cat"/>
</dbReference>
<dbReference type="InterPro" id="IPR038502">
    <property type="entry name" value="M1_LTA-4_hydro/amino_C_sf"/>
</dbReference>
<dbReference type="InterPro" id="IPR034015">
    <property type="entry name" value="M1_LTA4H"/>
</dbReference>
<dbReference type="InterPro" id="IPR001930">
    <property type="entry name" value="Peptidase_M1"/>
</dbReference>
<dbReference type="InterPro" id="IPR015211">
    <property type="entry name" value="Peptidase_M1_C"/>
</dbReference>
<dbReference type="InterPro" id="IPR014782">
    <property type="entry name" value="Peptidase_M1_dom"/>
</dbReference>
<dbReference type="InterPro" id="IPR027268">
    <property type="entry name" value="Peptidase_M4/M1_CTD_sf"/>
</dbReference>
<dbReference type="NCBIfam" id="TIGR02411">
    <property type="entry name" value="leuko_A4_hydro"/>
    <property type="match status" value="1"/>
</dbReference>
<dbReference type="PANTHER" id="PTHR45726">
    <property type="entry name" value="LEUKOTRIENE A-4 HYDROLASE"/>
    <property type="match status" value="1"/>
</dbReference>
<dbReference type="PANTHER" id="PTHR45726:SF3">
    <property type="entry name" value="LEUKOTRIENE A-4 HYDROLASE"/>
    <property type="match status" value="1"/>
</dbReference>
<dbReference type="Pfam" id="PF09127">
    <property type="entry name" value="Leuk-A4-hydro_C"/>
    <property type="match status" value="1"/>
</dbReference>
<dbReference type="Pfam" id="PF01433">
    <property type="entry name" value="Peptidase_M1"/>
    <property type="match status" value="1"/>
</dbReference>
<dbReference type="Pfam" id="PF17900">
    <property type="entry name" value="Peptidase_M1_N"/>
    <property type="match status" value="1"/>
</dbReference>
<dbReference type="PRINTS" id="PR00756">
    <property type="entry name" value="ALADIPTASE"/>
</dbReference>
<dbReference type="SMART" id="SM01263">
    <property type="entry name" value="Leuk-A4-hydro_C"/>
    <property type="match status" value="1"/>
</dbReference>
<dbReference type="SUPFAM" id="SSF48371">
    <property type="entry name" value="ARM repeat"/>
    <property type="match status" value="1"/>
</dbReference>
<dbReference type="SUPFAM" id="SSF63737">
    <property type="entry name" value="Leukotriene A4 hydrolase N-terminal domain"/>
    <property type="match status" value="1"/>
</dbReference>
<dbReference type="SUPFAM" id="SSF55486">
    <property type="entry name" value="Metalloproteases ('zincins'), catalytic domain"/>
    <property type="match status" value="1"/>
</dbReference>
<dbReference type="PROSITE" id="PS00142">
    <property type="entry name" value="ZINC_PROTEASE"/>
    <property type="match status" value="1"/>
</dbReference>
<sequence>MRRCTKNSRSTNPPRDPNTLSNYNAFRTTHTTVNFDILFEKQKLTGNVMHKLISLTNLEAREVILDSSFLNIHDVKVDGKQSKFELLPRQEPYGSALKIPLAEGVALSKTLDIDITVETTEKCTALQWLTPAQTSTQKHPYMFTQCQAIHARSIFPCQDTPDVKAVIDFNISSPLPVIASGVPVNDVSSSSSKSKNKVYKFHQKVPIPTYLFAMASGEIAEAPIGPRSRVAASPDKLEECKWELEADTEKFMQAIDKIIFPYIWGEYNVLILPPSFPYGGMENPIFTFATPSVISKDRQNVDVIAHELAHSWSGNLVTNASWEHFWLNEGWTTYLERRILAAVHGEPYRHFSAIIGWKALTESVERYGKDHEFTKLVVDLKGKDPDDAFSSVPYEKGFNFLFYLENLIGKDKFDKFIPHYFTKYKEASLDSYEFKSSILSFFSSDSEAHALLTSFDWDKWFYSPGLPPKPDFDTSLVDIVYALAQKWRTASESGFSPSAVDVNGLVANQLVVFLEQVLVFEKPLSAEQSKLMGDKYGLAKSENAEVLNMYFQVGLKAGDKSVIEPTAAFLSSIGRMKYVRPLYRALDKLDRNIAIEVFEKNKSFYHPICRGLVQKDLFGNKGS</sequence>
<comment type="function">
    <text evidence="2">Aminopeptidase that preferentially cleaves di- and tripeptides. Also has low epoxide hydrolase activity (in vitro). Can hydrolyze the epoxide leukotriene LTA(4) but it forms preferentially 5,6-dihydroxy-7,9,11,14-eicosatetraenoic acid rather than the cytokine leukotriene B(4) as the product compared to the homologous mammalian enzyme (in vitro).</text>
</comment>
<comment type="catalytic activity">
    <reaction evidence="2">
        <text>an epoxide + H2O = an ethanediol</text>
        <dbReference type="Rhea" id="RHEA:19037"/>
        <dbReference type="ChEBI" id="CHEBI:15377"/>
        <dbReference type="ChEBI" id="CHEBI:32955"/>
        <dbReference type="ChEBI" id="CHEBI:140594"/>
        <dbReference type="EC" id="3.3.2.10"/>
    </reaction>
</comment>
<comment type="cofactor">
    <cofactor evidence="2">
        <name>Zn(2+)</name>
        <dbReference type="ChEBI" id="CHEBI:29105"/>
    </cofactor>
    <text evidence="2">Binds 1 zinc ion per subunit.</text>
</comment>
<comment type="subcellular location">
    <subcellularLocation>
        <location evidence="2">Cytoplasm</location>
    </subcellularLocation>
    <subcellularLocation>
        <location evidence="2">Nucleus</location>
    </subcellularLocation>
</comment>
<comment type="similarity">
    <text evidence="5">Belongs to the peptidase M1 family.</text>
</comment>
<comment type="sequence caution" evidence="5">
    <conflict type="erroneous gene model prediction">
        <sequence resource="EMBL-CDS" id="EDN10979"/>
    </conflict>
</comment>